<proteinExistence type="inferred from homology"/>
<organism>
    <name type="scientific">Aromatoleum aromaticum (strain DSM 19018 / LMG 30748 / EbN1)</name>
    <name type="common">Azoarcus sp. (strain EbN1)</name>
    <dbReference type="NCBI Taxonomy" id="76114"/>
    <lineage>
        <taxon>Bacteria</taxon>
        <taxon>Pseudomonadati</taxon>
        <taxon>Pseudomonadota</taxon>
        <taxon>Betaproteobacteria</taxon>
        <taxon>Rhodocyclales</taxon>
        <taxon>Rhodocyclaceae</taxon>
        <taxon>Aromatoleum</taxon>
    </lineage>
</organism>
<accession>Q5P1G6</accession>
<name>DAPB_AROAE</name>
<feature type="chain" id="PRO_0000228320" description="4-hydroxy-tetrahydrodipicolinate reductase">
    <location>
        <begin position="1"/>
        <end position="276"/>
    </location>
</feature>
<feature type="active site" description="Proton donor/acceptor" evidence="1">
    <location>
        <position position="164"/>
    </location>
</feature>
<feature type="active site" description="Proton donor" evidence="1">
    <location>
        <position position="168"/>
    </location>
</feature>
<feature type="binding site" evidence="1">
    <location>
        <begin position="18"/>
        <end position="23"/>
    </location>
    <ligand>
        <name>NAD(+)</name>
        <dbReference type="ChEBI" id="CHEBI:57540"/>
    </ligand>
</feature>
<feature type="binding site" evidence="1">
    <location>
        <position position="44"/>
    </location>
    <ligand>
        <name>NAD(+)</name>
        <dbReference type="ChEBI" id="CHEBI:57540"/>
    </ligand>
</feature>
<feature type="binding site" evidence="1">
    <location>
        <position position="45"/>
    </location>
    <ligand>
        <name>NADP(+)</name>
        <dbReference type="ChEBI" id="CHEBI:58349"/>
    </ligand>
</feature>
<feature type="binding site" evidence="1">
    <location>
        <begin position="107"/>
        <end position="109"/>
    </location>
    <ligand>
        <name>NAD(+)</name>
        <dbReference type="ChEBI" id="CHEBI:57540"/>
    </ligand>
</feature>
<feature type="binding site" evidence="1">
    <location>
        <begin position="131"/>
        <end position="134"/>
    </location>
    <ligand>
        <name>NAD(+)</name>
        <dbReference type="ChEBI" id="CHEBI:57540"/>
    </ligand>
</feature>
<feature type="binding site" evidence="1">
    <location>
        <position position="165"/>
    </location>
    <ligand>
        <name>(S)-2,3,4,5-tetrahydrodipicolinate</name>
        <dbReference type="ChEBI" id="CHEBI:16845"/>
    </ligand>
</feature>
<feature type="binding site" evidence="1">
    <location>
        <begin position="174"/>
        <end position="175"/>
    </location>
    <ligand>
        <name>(S)-2,3,4,5-tetrahydrodipicolinate</name>
        <dbReference type="ChEBI" id="CHEBI:16845"/>
    </ligand>
</feature>
<evidence type="ECO:0000255" key="1">
    <source>
        <dbReference type="HAMAP-Rule" id="MF_00102"/>
    </source>
</evidence>
<evidence type="ECO:0000305" key="2"/>
<comment type="function">
    <text evidence="1">Catalyzes the conversion of 4-hydroxy-tetrahydrodipicolinate (HTPA) to tetrahydrodipicolinate.</text>
</comment>
<comment type="catalytic activity">
    <reaction evidence="1">
        <text>(S)-2,3,4,5-tetrahydrodipicolinate + NAD(+) + H2O = (2S,4S)-4-hydroxy-2,3,4,5-tetrahydrodipicolinate + NADH + H(+)</text>
        <dbReference type="Rhea" id="RHEA:35323"/>
        <dbReference type="ChEBI" id="CHEBI:15377"/>
        <dbReference type="ChEBI" id="CHEBI:15378"/>
        <dbReference type="ChEBI" id="CHEBI:16845"/>
        <dbReference type="ChEBI" id="CHEBI:57540"/>
        <dbReference type="ChEBI" id="CHEBI:57945"/>
        <dbReference type="ChEBI" id="CHEBI:67139"/>
        <dbReference type="EC" id="1.17.1.8"/>
    </reaction>
</comment>
<comment type="catalytic activity">
    <reaction evidence="1">
        <text>(S)-2,3,4,5-tetrahydrodipicolinate + NADP(+) + H2O = (2S,4S)-4-hydroxy-2,3,4,5-tetrahydrodipicolinate + NADPH + H(+)</text>
        <dbReference type="Rhea" id="RHEA:35331"/>
        <dbReference type="ChEBI" id="CHEBI:15377"/>
        <dbReference type="ChEBI" id="CHEBI:15378"/>
        <dbReference type="ChEBI" id="CHEBI:16845"/>
        <dbReference type="ChEBI" id="CHEBI:57783"/>
        <dbReference type="ChEBI" id="CHEBI:58349"/>
        <dbReference type="ChEBI" id="CHEBI:67139"/>
        <dbReference type="EC" id="1.17.1.8"/>
    </reaction>
</comment>
<comment type="pathway">
    <text evidence="1">Amino-acid biosynthesis; L-lysine biosynthesis via DAP pathway; (S)-tetrahydrodipicolinate from L-aspartate: step 4/4.</text>
</comment>
<comment type="subcellular location">
    <subcellularLocation>
        <location evidence="1">Cytoplasm</location>
    </subcellularLocation>
</comment>
<comment type="similarity">
    <text evidence="1">Belongs to the DapB family.</text>
</comment>
<comment type="caution">
    <text evidence="2">Was originally thought to be a dihydrodipicolinate reductase (DHDPR), catalyzing the conversion of dihydrodipicolinate to tetrahydrodipicolinate. However, it was shown in E.coli that the substrate of the enzymatic reaction is not dihydrodipicolinate (DHDP) but in fact (2S,4S)-4-hydroxy-2,3,4,5-tetrahydrodipicolinic acid (HTPA), the product released by the DapA-catalyzed reaction.</text>
</comment>
<reference key="1">
    <citation type="journal article" date="2005" name="Arch. Microbiol.">
        <title>The genome sequence of an anaerobic aromatic-degrading denitrifying bacterium, strain EbN1.</title>
        <authorList>
            <person name="Rabus R."/>
            <person name="Kube M."/>
            <person name="Heider J."/>
            <person name="Beck A."/>
            <person name="Heitmann K."/>
            <person name="Widdel F."/>
            <person name="Reinhardt R."/>
        </authorList>
    </citation>
    <scope>NUCLEOTIDE SEQUENCE [LARGE SCALE GENOMIC DNA]</scope>
    <source>
        <strain>DSM 19018 / LMG 30748 / EbN1</strain>
    </source>
</reference>
<keyword id="KW-0028">Amino-acid biosynthesis</keyword>
<keyword id="KW-0963">Cytoplasm</keyword>
<keyword id="KW-0220">Diaminopimelate biosynthesis</keyword>
<keyword id="KW-0457">Lysine biosynthesis</keyword>
<keyword id="KW-0520">NAD</keyword>
<keyword id="KW-0521">NADP</keyword>
<keyword id="KW-0560">Oxidoreductase</keyword>
<keyword id="KW-1185">Reference proteome</keyword>
<protein>
    <recommendedName>
        <fullName evidence="1">4-hydroxy-tetrahydrodipicolinate reductase</fullName>
        <shortName evidence="1">HTPA reductase</shortName>
        <ecNumber evidence="1">1.17.1.8</ecNumber>
    </recommendedName>
</protein>
<dbReference type="EC" id="1.17.1.8" evidence="1"/>
<dbReference type="EMBL" id="CR555306">
    <property type="protein sequence ID" value="CAI08848.1"/>
    <property type="molecule type" value="Genomic_DNA"/>
</dbReference>
<dbReference type="SMR" id="Q5P1G6"/>
<dbReference type="STRING" id="76114.ebA4812"/>
<dbReference type="KEGG" id="eba:ebA4812"/>
<dbReference type="eggNOG" id="COG0289">
    <property type="taxonomic scope" value="Bacteria"/>
</dbReference>
<dbReference type="HOGENOM" id="CLU_047479_2_1_4"/>
<dbReference type="UniPathway" id="UPA00034">
    <property type="reaction ID" value="UER00018"/>
</dbReference>
<dbReference type="Proteomes" id="UP000006552">
    <property type="component" value="Chromosome"/>
</dbReference>
<dbReference type="GO" id="GO:0005829">
    <property type="term" value="C:cytosol"/>
    <property type="evidence" value="ECO:0007669"/>
    <property type="project" value="TreeGrafter"/>
</dbReference>
<dbReference type="GO" id="GO:0008839">
    <property type="term" value="F:4-hydroxy-tetrahydrodipicolinate reductase"/>
    <property type="evidence" value="ECO:0007669"/>
    <property type="project" value="UniProtKB-EC"/>
</dbReference>
<dbReference type="GO" id="GO:0051287">
    <property type="term" value="F:NAD binding"/>
    <property type="evidence" value="ECO:0007669"/>
    <property type="project" value="UniProtKB-UniRule"/>
</dbReference>
<dbReference type="GO" id="GO:0050661">
    <property type="term" value="F:NADP binding"/>
    <property type="evidence" value="ECO:0007669"/>
    <property type="project" value="UniProtKB-UniRule"/>
</dbReference>
<dbReference type="GO" id="GO:0016726">
    <property type="term" value="F:oxidoreductase activity, acting on CH or CH2 groups, NAD or NADP as acceptor"/>
    <property type="evidence" value="ECO:0007669"/>
    <property type="project" value="UniProtKB-UniRule"/>
</dbReference>
<dbReference type="GO" id="GO:0019877">
    <property type="term" value="P:diaminopimelate biosynthetic process"/>
    <property type="evidence" value="ECO:0007669"/>
    <property type="project" value="UniProtKB-UniRule"/>
</dbReference>
<dbReference type="GO" id="GO:0009089">
    <property type="term" value="P:lysine biosynthetic process via diaminopimelate"/>
    <property type="evidence" value="ECO:0007669"/>
    <property type="project" value="UniProtKB-UniRule"/>
</dbReference>
<dbReference type="CDD" id="cd02274">
    <property type="entry name" value="DHDPR_N"/>
    <property type="match status" value="1"/>
</dbReference>
<dbReference type="FunFam" id="3.30.360.10:FF:000004">
    <property type="entry name" value="4-hydroxy-tetrahydrodipicolinate reductase"/>
    <property type="match status" value="1"/>
</dbReference>
<dbReference type="FunFam" id="3.40.50.720:FF:000048">
    <property type="entry name" value="4-hydroxy-tetrahydrodipicolinate reductase"/>
    <property type="match status" value="1"/>
</dbReference>
<dbReference type="Gene3D" id="3.30.360.10">
    <property type="entry name" value="Dihydrodipicolinate Reductase, domain 2"/>
    <property type="match status" value="1"/>
</dbReference>
<dbReference type="Gene3D" id="3.40.50.720">
    <property type="entry name" value="NAD(P)-binding Rossmann-like Domain"/>
    <property type="match status" value="1"/>
</dbReference>
<dbReference type="HAMAP" id="MF_00102">
    <property type="entry name" value="DapB"/>
    <property type="match status" value="1"/>
</dbReference>
<dbReference type="InterPro" id="IPR022663">
    <property type="entry name" value="DapB_C"/>
</dbReference>
<dbReference type="InterPro" id="IPR000846">
    <property type="entry name" value="DapB_N"/>
</dbReference>
<dbReference type="InterPro" id="IPR022664">
    <property type="entry name" value="DapB_N_CS"/>
</dbReference>
<dbReference type="InterPro" id="IPR023940">
    <property type="entry name" value="DHDPR_bac"/>
</dbReference>
<dbReference type="InterPro" id="IPR036291">
    <property type="entry name" value="NAD(P)-bd_dom_sf"/>
</dbReference>
<dbReference type="NCBIfam" id="TIGR00036">
    <property type="entry name" value="dapB"/>
    <property type="match status" value="1"/>
</dbReference>
<dbReference type="PANTHER" id="PTHR20836:SF0">
    <property type="entry name" value="4-HYDROXY-TETRAHYDRODIPICOLINATE REDUCTASE 1, CHLOROPLASTIC-RELATED"/>
    <property type="match status" value="1"/>
</dbReference>
<dbReference type="PANTHER" id="PTHR20836">
    <property type="entry name" value="DIHYDRODIPICOLINATE REDUCTASE"/>
    <property type="match status" value="1"/>
</dbReference>
<dbReference type="Pfam" id="PF05173">
    <property type="entry name" value="DapB_C"/>
    <property type="match status" value="1"/>
</dbReference>
<dbReference type="Pfam" id="PF01113">
    <property type="entry name" value="DapB_N"/>
    <property type="match status" value="1"/>
</dbReference>
<dbReference type="PIRSF" id="PIRSF000161">
    <property type="entry name" value="DHPR"/>
    <property type="match status" value="1"/>
</dbReference>
<dbReference type="SUPFAM" id="SSF55347">
    <property type="entry name" value="Glyceraldehyde-3-phosphate dehydrogenase-like, C-terminal domain"/>
    <property type="match status" value="1"/>
</dbReference>
<dbReference type="SUPFAM" id="SSF51735">
    <property type="entry name" value="NAD(P)-binding Rossmann-fold domains"/>
    <property type="match status" value="1"/>
</dbReference>
<dbReference type="PROSITE" id="PS01298">
    <property type="entry name" value="DAPB"/>
    <property type="match status" value="1"/>
</dbReference>
<sequence>MSSKRNSLMLPLRIAIAGASGRMGRMLIEATLKEEGAVLASAFDRPGTTFIGRDAGELSGSATGILITDDPRAAIAAADCVIDFTRPEGTLAHLALARELGKAMVIGTTGFSTAEKEAIAAAAQAIPIVFAPNMAVGVNAVFKLLEVAARILDDGYDVEVIEAHHRFKVDAPSGTALRMGEVVACELGRDLETCAIYGREGVTGERKAETIGFSTIRGGDVVGDHTVLFAGIGERIEITHRSGSRMPYASGSLRAARFLAGRSSGLFDMQDVLGLR</sequence>
<gene>
    <name evidence="1" type="primary">dapB</name>
    <name type="ordered locus">AZOSEA27230</name>
    <name type="ORF">ebA4812</name>
</gene>